<protein>
    <recommendedName>
        <fullName>Movement protein</fullName>
        <shortName>MP</shortName>
    </recommendedName>
</protein>
<feature type="chain" id="PRO_0000316929" description="Movement protein">
    <location>
        <begin position="1"/>
        <end position="101"/>
    </location>
</feature>
<feature type="transmembrane region" description="Helical" evidence="2">
    <location>
        <begin position="30"/>
        <end position="50"/>
    </location>
</feature>
<name>MP_MSVRA</name>
<reference key="1">
    <citation type="journal article" date="2001" name="Virology">
        <title>Sequence diversity and virulence in Zea mays of Maize streak virus isolates.</title>
        <authorList>
            <person name="Martin D.P."/>
            <person name="Willment J.A."/>
            <person name="Billharz R."/>
            <person name="Velders R."/>
            <person name="Odhiambo B."/>
            <person name="Njuguna J."/>
            <person name="James D."/>
            <person name="Rybicki E.P."/>
        </authorList>
    </citation>
    <scope>NUCLEOTIDE SEQUENCE [GENOMIC DNA]</scope>
</reference>
<reference key="2">
    <citation type="journal article" date="2001" name="J. Virol. Methods">
        <title>Analysis of the diversity of African streak mastreviruses using PCR-generated RFLPs and partial sequence data.</title>
        <authorList>
            <person name="Willment J.A."/>
            <person name="Martin D.P."/>
            <person name="Rybicki E.P."/>
        </authorList>
    </citation>
    <scope>NUCLEOTIDE SEQUENCE [GENOMIC DNA] OF 1-71</scope>
</reference>
<evidence type="ECO:0000250" key="1"/>
<evidence type="ECO:0000255" key="2"/>
<evidence type="ECO:0000305" key="3"/>
<accession>Q91MG0</accession>
<accession>Q9WKC9</accession>
<organism>
    <name type="scientific">Maize streak virus genotype D (isolate Raw)</name>
    <name type="common">MSV</name>
    <dbReference type="NCBI Taxonomy" id="268343"/>
    <lineage>
        <taxon>Viruses</taxon>
        <taxon>Monodnaviria</taxon>
        <taxon>Shotokuvirae</taxon>
        <taxon>Cressdnaviricota</taxon>
        <taxon>Repensiviricetes</taxon>
        <taxon>Geplafuvirales</taxon>
        <taxon>Geminiviridae</taxon>
        <taxon>Mastrevirus</taxon>
        <taxon>Maize streak virus</taxon>
    </lineage>
</organism>
<dbReference type="EMBL" id="AF329889">
    <property type="protein sequence ID" value="AAK73471.1"/>
    <property type="molecule type" value="Genomic_DNA"/>
</dbReference>
<dbReference type="EMBL" id="AJ012639">
    <property type="protein sequence ID" value="CAA10093.1"/>
    <property type="molecule type" value="Genomic_DNA"/>
</dbReference>
<dbReference type="SMR" id="Q91MG0"/>
<dbReference type="Proteomes" id="UP000007781">
    <property type="component" value="Genome"/>
</dbReference>
<dbReference type="GO" id="GO:0033644">
    <property type="term" value="C:host cell membrane"/>
    <property type="evidence" value="ECO:0007669"/>
    <property type="project" value="UniProtKB-SubCell"/>
</dbReference>
<dbReference type="GO" id="GO:0016020">
    <property type="term" value="C:membrane"/>
    <property type="evidence" value="ECO:0007669"/>
    <property type="project" value="UniProtKB-KW"/>
</dbReference>
<dbReference type="GO" id="GO:0046740">
    <property type="term" value="P:transport of virus in host, cell to cell"/>
    <property type="evidence" value="ECO:0007669"/>
    <property type="project" value="UniProtKB-KW"/>
</dbReference>
<dbReference type="InterPro" id="IPR002621">
    <property type="entry name" value="Gemini_mov"/>
</dbReference>
<dbReference type="Pfam" id="PF01708">
    <property type="entry name" value="Gemini_mov"/>
    <property type="match status" value="1"/>
</dbReference>
<organismHost>
    <name type="scientific">Avena sativa</name>
    <name type="common">Oat</name>
    <dbReference type="NCBI Taxonomy" id="4498"/>
</organismHost>
<organismHost>
    <name type="scientific">Axonopus compressus</name>
    <dbReference type="NCBI Taxonomy" id="217170"/>
</organismHost>
<organismHost>
    <name type="scientific">Cenchrus americanus</name>
    <name type="common">Pearl millet</name>
    <name type="synonym">Pennisetum glaucum</name>
    <dbReference type="NCBI Taxonomy" id="4543"/>
</organismHost>
<organismHost>
    <name type="scientific">Cenchrus polystachios</name>
    <dbReference type="NCBI Taxonomy" id="281129"/>
</organismHost>
<organismHost>
    <name type="scientific">Coix lacryma-jobi</name>
    <name type="common">Job's tears</name>
    <dbReference type="NCBI Taxonomy" id="4505"/>
</organismHost>
<organismHost>
    <name type="scientific">Dactyloctenium aegyptium</name>
    <dbReference type="NCBI Taxonomy" id="270102"/>
</organismHost>
<organismHost>
    <name type="scientific">Digitaria</name>
    <dbReference type="NCBI Taxonomy" id="66017"/>
</organismHost>
<organismHost>
    <name type="scientific">Echinochloa colona</name>
    <dbReference type="NCBI Taxonomy" id="90396"/>
</organismHost>
<organismHost>
    <name type="scientific">Eleusine coracana</name>
    <name type="common">Indian finger millet</name>
    <name type="synonym">Ragi</name>
    <dbReference type="NCBI Taxonomy" id="4511"/>
</organismHost>
<organismHost>
    <name type="scientific">Eleusine indica</name>
    <name type="common">Goosegrass</name>
    <name type="synonym">Cynosurus indicus</name>
    <dbReference type="NCBI Taxonomy" id="29674"/>
</organismHost>
<organismHost>
    <name type="scientific">Hordeum vulgare</name>
    <name type="common">Barley</name>
    <dbReference type="NCBI Taxonomy" id="4513"/>
</organismHost>
<organismHost>
    <name type="scientific">Megathyrsus maximus</name>
    <dbReference type="NCBI Taxonomy" id="59788"/>
</organismHost>
<organismHost>
    <name type="scientific">Melinis repens</name>
    <name type="common">Red Natal grass</name>
    <name type="synonym">Rhynchelytrum repens</name>
    <dbReference type="NCBI Taxonomy" id="29709"/>
</organismHost>
<organismHost>
    <name type="scientific">Oryza glaberrima</name>
    <name type="common">African rice</name>
    <dbReference type="NCBI Taxonomy" id="4538"/>
</organismHost>
<organismHost>
    <name type="scientific">Oryza sativa</name>
    <name type="common">Rice</name>
    <dbReference type="NCBI Taxonomy" id="4530"/>
</organismHost>
<organismHost>
    <name type="scientific">Paspalum conjugatum</name>
    <name type="common">Hilo grass</name>
    <dbReference type="NCBI Taxonomy" id="158143"/>
</organismHost>
<organismHost>
    <name type="scientific">Paspalum notatum</name>
    <name type="common">Bahia grass</name>
    <dbReference type="NCBI Taxonomy" id="147272"/>
</organismHost>
<organismHost>
    <name type="scientific">Paspalum scrobiculatum</name>
    <dbReference type="NCBI Taxonomy" id="173849"/>
</organismHost>
<organismHost>
    <name type="scientific">Rottboellia cochinchinensis</name>
    <dbReference type="NCBI Taxonomy" id="300125"/>
</organismHost>
<organismHost>
    <name type="scientific">Saccharum officinarum</name>
    <name type="common">Sugarcane</name>
    <dbReference type="NCBI Taxonomy" id="4547"/>
</organismHost>
<organismHost>
    <name type="scientific">Setaria barbata</name>
    <dbReference type="NCBI Taxonomy" id="192628"/>
</organismHost>
<organismHost>
    <name type="scientific">Triticum aestivum</name>
    <name type="common">Wheat</name>
    <dbReference type="NCBI Taxonomy" id="4565"/>
</organismHost>
<organismHost>
    <name type="scientific">Urochloa deflexa</name>
    <dbReference type="NCBI Taxonomy" id="240436"/>
</organismHost>
<organismHost>
    <name type="scientific">Zea mays</name>
    <name type="common">Maize</name>
    <dbReference type="NCBI Taxonomy" id="4577"/>
</organismHost>
<comment type="function">
    <text>Involved in the viral transport within, and between cells.</text>
</comment>
<comment type="subunit">
    <text evidence="1">Interacts with the capsid protein (CP). Part of a MP-CP-viral DNA complex (By similarity).</text>
</comment>
<comment type="subcellular location">
    <subcellularLocation>
        <location evidence="3">Host membrane</location>
        <topology evidence="3">Single-pass membrane protein</topology>
    </subcellularLocation>
</comment>
<comment type="similarity">
    <text evidence="3">Belongs to the mastrevirus movement protein family.</text>
</comment>
<sequence>MDPQSAIYTLPRVPTAAPTTGGVSWSHVGEVAILSFVALICIYLLYLWVLRDLILVLKARRGRSTEELIFGSEAVDRRHPIPNTLVPTAPVHPGPFVPGQG</sequence>
<keyword id="KW-1043">Host membrane</keyword>
<keyword id="KW-0472">Membrane</keyword>
<keyword id="KW-1185">Reference proteome</keyword>
<keyword id="KW-0812">Transmembrane</keyword>
<keyword id="KW-1133">Transmembrane helix</keyword>
<keyword id="KW-0813">Transport</keyword>
<keyword id="KW-0916">Viral movement protein</keyword>
<gene>
    <name type="ORF">V2</name>
</gene>
<proteinExistence type="inferred from homology"/>